<keyword id="KW-0031">Aminopeptidase</keyword>
<keyword id="KW-1003">Cell membrane</keyword>
<keyword id="KW-1015">Disulfide bond</keyword>
<keyword id="KW-0325">Glycoprotein</keyword>
<keyword id="KW-0336">GPI-anchor</keyword>
<keyword id="KW-0378">Hydrolase</keyword>
<keyword id="KW-0449">Lipoprotein</keyword>
<keyword id="KW-0472">Membrane</keyword>
<keyword id="KW-0479">Metal-binding</keyword>
<keyword id="KW-0482">Metalloprotease</keyword>
<keyword id="KW-0645">Protease</keyword>
<keyword id="KW-0732">Signal</keyword>
<keyword id="KW-0862">Zinc</keyword>
<gene>
    <name type="primary">APN1</name>
</gene>
<proteinExistence type="evidence at protein level"/>
<name>AMPN_PLUXY</name>
<dbReference type="EC" id="3.4.11.2"/>
<dbReference type="EMBL" id="X97878">
    <property type="protein sequence ID" value="CAA66467.1"/>
    <property type="molecule type" value="mRNA"/>
</dbReference>
<dbReference type="SMR" id="P91887"/>
<dbReference type="MEROPS" id="M01.030"/>
<dbReference type="GlyCosmos" id="P91887">
    <property type="glycosylation" value="3 sites, No reported glycans"/>
</dbReference>
<dbReference type="BRENDA" id="3.4.11.2">
    <property type="organism ID" value="4920"/>
</dbReference>
<dbReference type="GO" id="GO:0005737">
    <property type="term" value="C:cytoplasm"/>
    <property type="evidence" value="ECO:0007669"/>
    <property type="project" value="TreeGrafter"/>
</dbReference>
<dbReference type="GO" id="GO:0005615">
    <property type="term" value="C:extracellular space"/>
    <property type="evidence" value="ECO:0007669"/>
    <property type="project" value="TreeGrafter"/>
</dbReference>
<dbReference type="GO" id="GO:0005886">
    <property type="term" value="C:plasma membrane"/>
    <property type="evidence" value="ECO:0007669"/>
    <property type="project" value="UniProtKB-SubCell"/>
</dbReference>
<dbReference type="GO" id="GO:0098552">
    <property type="term" value="C:side of membrane"/>
    <property type="evidence" value="ECO:0007669"/>
    <property type="project" value="UniProtKB-KW"/>
</dbReference>
<dbReference type="GO" id="GO:0016285">
    <property type="term" value="F:alanyl aminopeptidase activity"/>
    <property type="evidence" value="ECO:0007669"/>
    <property type="project" value="UniProtKB-EC"/>
</dbReference>
<dbReference type="GO" id="GO:0070006">
    <property type="term" value="F:metalloaminopeptidase activity"/>
    <property type="evidence" value="ECO:0007669"/>
    <property type="project" value="TreeGrafter"/>
</dbReference>
<dbReference type="GO" id="GO:0042277">
    <property type="term" value="F:peptide binding"/>
    <property type="evidence" value="ECO:0007669"/>
    <property type="project" value="TreeGrafter"/>
</dbReference>
<dbReference type="GO" id="GO:0008270">
    <property type="term" value="F:zinc ion binding"/>
    <property type="evidence" value="ECO:0007669"/>
    <property type="project" value="InterPro"/>
</dbReference>
<dbReference type="GO" id="GO:0043171">
    <property type="term" value="P:peptide catabolic process"/>
    <property type="evidence" value="ECO:0007669"/>
    <property type="project" value="TreeGrafter"/>
</dbReference>
<dbReference type="GO" id="GO:0006508">
    <property type="term" value="P:proteolysis"/>
    <property type="evidence" value="ECO:0007669"/>
    <property type="project" value="UniProtKB-KW"/>
</dbReference>
<dbReference type="CDD" id="cd09601">
    <property type="entry name" value="M1_APN-Q_like"/>
    <property type="match status" value="1"/>
</dbReference>
<dbReference type="FunFam" id="1.25.50.20:FF:000001">
    <property type="entry name" value="Aminopeptidase"/>
    <property type="match status" value="1"/>
</dbReference>
<dbReference type="FunFam" id="2.60.40.1910:FF:000008">
    <property type="entry name" value="Aminopeptidase"/>
    <property type="match status" value="1"/>
</dbReference>
<dbReference type="FunFam" id="1.10.390.10:FF:000013">
    <property type="entry name" value="Aminopeptidase N"/>
    <property type="match status" value="1"/>
</dbReference>
<dbReference type="Gene3D" id="1.25.50.20">
    <property type="match status" value="1"/>
</dbReference>
<dbReference type="Gene3D" id="2.60.40.1910">
    <property type="match status" value="1"/>
</dbReference>
<dbReference type="Gene3D" id="1.10.390.10">
    <property type="entry name" value="Neutral Protease Domain 2"/>
    <property type="match status" value="1"/>
</dbReference>
<dbReference type="Gene3D" id="2.60.40.1730">
    <property type="entry name" value="tricorn interacting facor f3 domain"/>
    <property type="match status" value="1"/>
</dbReference>
<dbReference type="InterPro" id="IPR045357">
    <property type="entry name" value="Aminopeptidase_N-like_N"/>
</dbReference>
<dbReference type="InterPro" id="IPR042097">
    <property type="entry name" value="Aminopeptidase_N-like_N_sf"/>
</dbReference>
<dbReference type="InterPro" id="IPR024571">
    <property type="entry name" value="ERAP1-like_C_dom"/>
</dbReference>
<dbReference type="InterPro" id="IPR034016">
    <property type="entry name" value="M1_APN-typ"/>
</dbReference>
<dbReference type="InterPro" id="IPR001930">
    <property type="entry name" value="Peptidase_M1"/>
</dbReference>
<dbReference type="InterPro" id="IPR050344">
    <property type="entry name" value="Peptidase_M1_aminopeptidases"/>
</dbReference>
<dbReference type="InterPro" id="IPR014782">
    <property type="entry name" value="Peptidase_M1_dom"/>
</dbReference>
<dbReference type="InterPro" id="IPR027268">
    <property type="entry name" value="Peptidase_M4/M1_CTD_sf"/>
</dbReference>
<dbReference type="PANTHER" id="PTHR11533:SF290">
    <property type="entry name" value="AMINOPEPTIDASE"/>
    <property type="match status" value="1"/>
</dbReference>
<dbReference type="PANTHER" id="PTHR11533">
    <property type="entry name" value="PROTEASE M1 ZINC METALLOPROTEASE"/>
    <property type="match status" value="1"/>
</dbReference>
<dbReference type="Pfam" id="PF11838">
    <property type="entry name" value="ERAP1_C"/>
    <property type="match status" value="1"/>
</dbReference>
<dbReference type="Pfam" id="PF01433">
    <property type="entry name" value="Peptidase_M1"/>
    <property type="match status" value="1"/>
</dbReference>
<dbReference type="Pfam" id="PF17900">
    <property type="entry name" value="Peptidase_M1_N"/>
    <property type="match status" value="1"/>
</dbReference>
<dbReference type="PRINTS" id="PR00756">
    <property type="entry name" value="ALADIPTASE"/>
</dbReference>
<dbReference type="SUPFAM" id="SSF63737">
    <property type="entry name" value="Leukotriene A4 hydrolase N-terminal domain"/>
    <property type="match status" value="1"/>
</dbReference>
<dbReference type="SUPFAM" id="SSF55486">
    <property type="entry name" value="Metalloproteases ('zincins'), catalytic domain"/>
    <property type="match status" value="1"/>
</dbReference>
<dbReference type="PROSITE" id="PS00142">
    <property type="entry name" value="ZINC_PROTEASE"/>
    <property type="match status" value="1"/>
</dbReference>
<accession>P91887</accession>
<comment type="catalytic activity">
    <reaction>
        <text>Release of an N-terminal amino acid, Xaa-|-Yaa- from a peptide, amide or arylamide. Xaa is preferably Ala, but may be most amino acids including Pro (slow action). When a terminal hydrophobic residue is followed by a prolyl residue, the two may be released as an intact Xaa-Pro dipeptide.</text>
        <dbReference type="EC" id="3.4.11.2"/>
    </reaction>
</comment>
<comment type="cofactor">
    <cofactor evidence="1">
        <name>Zn(2+)</name>
        <dbReference type="ChEBI" id="CHEBI:29105"/>
    </cofactor>
    <text evidence="1">Binds 1 zinc ion per subunit.</text>
</comment>
<comment type="subcellular location">
    <subcellularLocation>
        <location>Cell membrane</location>
        <topology>Lipid-anchor</topology>
        <topology>GPI-anchor</topology>
    </subcellularLocation>
</comment>
<comment type="similarity">
    <text evidence="4">Belongs to the peptidase M1 family.</text>
</comment>
<feature type="signal peptide" evidence="2">
    <location>
        <begin position="1"/>
        <end position="15"/>
    </location>
</feature>
<feature type="chain" id="PRO_0000026743" description="Aminopeptidase N">
    <location>
        <begin position="16"/>
        <end status="unknown"/>
    </location>
</feature>
<feature type="propeptide" id="PRO_0000026744" description="Removed in mature form" evidence="2">
    <location>
        <begin status="unknown"/>
        <end position="946"/>
    </location>
</feature>
<feature type="active site" description="Proton acceptor" evidence="3">
    <location>
        <position position="345"/>
    </location>
</feature>
<feature type="binding site" evidence="1">
    <location>
        <begin position="308"/>
        <end position="312"/>
    </location>
    <ligand>
        <name>substrate</name>
    </ligand>
</feature>
<feature type="binding site" evidence="3">
    <location>
        <position position="344"/>
    </location>
    <ligand>
        <name>Zn(2+)</name>
        <dbReference type="ChEBI" id="CHEBI:29105"/>
        <note>catalytic</note>
    </ligand>
</feature>
<feature type="binding site" evidence="3">
    <location>
        <position position="348"/>
    </location>
    <ligand>
        <name>Zn(2+)</name>
        <dbReference type="ChEBI" id="CHEBI:29105"/>
        <note>catalytic</note>
    </ligand>
</feature>
<feature type="binding site" evidence="3">
    <location>
        <position position="367"/>
    </location>
    <ligand>
        <name>Zn(2+)</name>
        <dbReference type="ChEBI" id="CHEBI:29105"/>
        <note>catalytic</note>
    </ligand>
</feature>
<feature type="site" description="Transition state stabilizer" evidence="1">
    <location>
        <position position="429"/>
    </location>
</feature>
<feature type="glycosylation site" description="N-linked (GlcNAc...) asparagine" evidence="2">
    <location>
        <position position="60"/>
    </location>
</feature>
<feature type="glycosylation site" description="N-linked (GlcNAc...) asparagine" evidence="2">
    <location>
        <position position="550"/>
    </location>
</feature>
<feature type="glycosylation site" description="N-linked (GlcNAc...) asparagine" evidence="2">
    <location>
        <position position="605"/>
    </location>
</feature>
<feature type="disulfide bond" evidence="1">
    <location>
        <begin position="715"/>
        <end position="722"/>
    </location>
</feature>
<feature type="disulfide bond" evidence="1">
    <location>
        <begin position="751"/>
        <end position="787"/>
    </location>
</feature>
<protein>
    <recommendedName>
        <fullName>Aminopeptidase N</fullName>
        <shortName>AP-N</shortName>
        <ecNumber>3.4.11.2</ecNumber>
    </recommendedName>
    <alternativeName>
        <fullName>Apn1</fullName>
    </alternativeName>
    <alternativeName>
        <fullName>Microsomal aminopeptidase</fullName>
    </alternativeName>
</protein>
<reference key="1">
    <citation type="journal article" date="1997" name="Eur. J. Biochem.">
        <title>Cloning and characterization of Manduca sexta and Plutella xylostella midgut aminopeptidase N related to Bacillus thuringiensis toxin-binding proteins.</title>
        <authorList>
            <person name="Denolf P.H."/>
            <person name="Hendrickx K."/>
            <person name="van Damme J."/>
            <person name="Jansens S."/>
            <person name="Peferoen M."/>
            <person name="Degheele D."/>
            <person name="van Rie J."/>
        </authorList>
    </citation>
    <scope>NUCLEOTIDE SEQUENCE [MRNA]</scope>
    <scope>CHARACTERIZATION</scope>
    <source>
        <tissue>Midgut</tissue>
    </source>
</reference>
<sequence length="946" mass="106578">MRLLICLTLLGLVCGNPVQLTDNSIALQNTYDNYVLPGESFPTFYDVQLFFDPEYEASFNGTVAIRVVPRIATQEIVLHAMEMEILSIRAYSDLPSDDNLNENLFSSYTLATDDTHLLKIQFTRVLDALQPITVEISYSAQYAPNMFGVYVSRYVENGATVSLVTSQLQPTFARRAFPCYDEPALKAVFRTTIYAPPAYNVVETNMPLRTDSLKSDRPGFTKHEFQDTLVMSSYLLAYLVSKFDYISNENNPTYDKSMKVFSRPGTQNTAEFALDFGQKNMVELEKYTEFPYAFPKIDKVAVPDFAAGAMENWGLVIYREIALLVQEGVTTTSTLQGIGRIISHENTHQWFGNEVGPDSWTYTWLNEGFANFFESFATDLVLPEWRMMDQFVINMQNVFQSDAVLSVNPITFEVRTPSQILGTFNSVAYQKSGSVIRMMQHFLTPEIFRKSLALYISRMSRKAAKPTDLFEAIQEVVDASDHSIRWRLSIIMNRWTQQGGFPVVTVRRSAPSAQSFVITQRRFLTDSTQESNTVWNVPLNWVLSTDVNFNDTRPMAWLPPQLAAEAVQVPGLQNAEWFIVNKQQTGYYRVNYDPENWRALAKVLNDTHEIIHLLNRAQLIDDSFNLARNGRLDYSLAFDLSRYLVQERDYIPWAAANAAFNYLNSVLSGSSVHPLFQEYLLFLTAPLYQRLGFNAATGEEHVTPFHRNIILNINCLHGNEDCVSTAETLLQNFRDNPTQTLNPDIQTTVFCSGLRGGDVDNFNFLWARYTATQDSSEQSILLNALGCTSNADRRDFLFSQVIASDSQVREQDRHSVLVSAINSGPDNMNAALDFVLENFANIQPNVQGLTGTTNILNAFARTLTTQEHANKIDEFSNKYANVFTAGEMASVAAIKENIAASITWNSQNAATVEAWLRKNFGTDGASTVSASITIIISAMVAIYNIL</sequence>
<organism>
    <name type="scientific">Plutella xylostella</name>
    <name type="common">Diamondback moth</name>
    <name type="synonym">Plutella maculipennis</name>
    <dbReference type="NCBI Taxonomy" id="51655"/>
    <lineage>
        <taxon>Eukaryota</taxon>
        <taxon>Metazoa</taxon>
        <taxon>Ecdysozoa</taxon>
        <taxon>Arthropoda</taxon>
        <taxon>Hexapoda</taxon>
        <taxon>Insecta</taxon>
        <taxon>Pterygota</taxon>
        <taxon>Neoptera</taxon>
        <taxon>Endopterygota</taxon>
        <taxon>Lepidoptera</taxon>
        <taxon>Glossata</taxon>
        <taxon>Ditrysia</taxon>
        <taxon>Yponomeutoidea</taxon>
        <taxon>Plutellidae</taxon>
        <taxon>Plutella</taxon>
    </lineage>
</organism>
<evidence type="ECO:0000250" key="1"/>
<evidence type="ECO:0000255" key="2"/>
<evidence type="ECO:0000255" key="3">
    <source>
        <dbReference type="PROSITE-ProRule" id="PRU10095"/>
    </source>
</evidence>
<evidence type="ECO:0000305" key="4"/>